<organism>
    <name type="scientific">Clostridium botulinum (strain Kyoto / Type A2)</name>
    <dbReference type="NCBI Taxonomy" id="536232"/>
    <lineage>
        <taxon>Bacteria</taxon>
        <taxon>Bacillati</taxon>
        <taxon>Bacillota</taxon>
        <taxon>Clostridia</taxon>
        <taxon>Eubacteriales</taxon>
        <taxon>Clostridiaceae</taxon>
        <taxon>Clostridium</taxon>
    </lineage>
</organism>
<protein>
    <recommendedName>
        <fullName evidence="1">Large ribosomal subunit protein uL29</fullName>
    </recommendedName>
    <alternativeName>
        <fullName evidence="2">50S ribosomal protein L29</fullName>
    </alternativeName>
</protein>
<sequence length="70" mass="8327">MKARELQELRKSSPQELQSKLNDLKAELFNLRFQLATGQLENPMRIREVKKSIAQIKTILREEEIRAYQQ</sequence>
<comment type="similarity">
    <text evidence="1">Belongs to the universal ribosomal protein uL29 family.</text>
</comment>
<accession>C1FMU3</accession>
<dbReference type="EMBL" id="CP001581">
    <property type="protein sequence ID" value="ACO85072.1"/>
    <property type="molecule type" value="Genomic_DNA"/>
</dbReference>
<dbReference type="RefSeq" id="WP_003357691.1">
    <property type="nucleotide sequence ID" value="NC_012563.1"/>
</dbReference>
<dbReference type="SMR" id="C1FMU3"/>
<dbReference type="GeneID" id="92940242"/>
<dbReference type="KEGG" id="cby:CLM_3940"/>
<dbReference type="eggNOG" id="COG0255">
    <property type="taxonomic scope" value="Bacteria"/>
</dbReference>
<dbReference type="HOGENOM" id="CLU_158491_5_2_9"/>
<dbReference type="Proteomes" id="UP000001374">
    <property type="component" value="Chromosome"/>
</dbReference>
<dbReference type="GO" id="GO:0022625">
    <property type="term" value="C:cytosolic large ribosomal subunit"/>
    <property type="evidence" value="ECO:0007669"/>
    <property type="project" value="TreeGrafter"/>
</dbReference>
<dbReference type="GO" id="GO:0003735">
    <property type="term" value="F:structural constituent of ribosome"/>
    <property type="evidence" value="ECO:0007669"/>
    <property type="project" value="InterPro"/>
</dbReference>
<dbReference type="GO" id="GO:0006412">
    <property type="term" value="P:translation"/>
    <property type="evidence" value="ECO:0007669"/>
    <property type="project" value="UniProtKB-UniRule"/>
</dbReference>
<dbReference type="CDD" id="cd00427">
    <property type="entry name" value="Ribosomal_L29_HIP"/>
    <property type="match status" value="1"/>
</dbReference>
<dbReference type="FunFam" id="1.10.287.310:FF:000001">
    <property type="entry name" value="50S ribosomal protein L29"/>
    <property type="match status" value="1"/>
</dbReference>
<dbReference type="Gene3D" id="1.10.287.310">
    <property type="match status" value="1"/>
</dbReference>
<dbReference type="HAMAP" id="MF_00374">
    <property type="entry name" value="Ribosomal_uL29"/>
    <property type="match status" value="1"/>
</dbReference>
<dbReference type="InterPro" id="IPR050063">
    <property type="entry name" value="Ribosomal_protein_uL29"/>
</dbReference>
<dbReference type="InterPro" id="IPR001854">
    <property type="entry name" value="Ribosomal_uL29"/>
</dbReference>
<dbReference type="InterPro" id="IPR018254">
    <property type="entry name" value="Ribosomal_uL29_CS"/>
</dbReference>
<dbReference type="InterPro" id="IPR036049">
    <property type="entry name" value="Ribosomal_uL29_sf"/>
</dbReference>
<dbReference type="NCBIfam" id="TIGR00012">
    <property type="entry name" value="L29"/>
    <property type="match status" value="1"/>
</dbReference>
<dbReference type="PANTHER" id="PTHR10916">
    <property type="entry name" value="60S RIBOSOMAL PROTEIN L35/50S RIBOSOMAL PROTEIN L29"/>
    <property type="match status" value="1"/>
</dbReference>
<dbReference type="PANTHER" id="PTHR10916:SF0">
    <property type="entry name" value="LARGE RIBOSOMAL SUBUNIT PROTEIN UL29C"/>
    <property type="match status" value="1"/>
</dbReference>
<dbReference type="Pfam" id="PF00831">
    <property type="entry name" value="Ribosomal_L29"/>
    <property type="match status" value="1"/>
</dbReference>
<dbReference type="SUPFAM" id="SSF46561">
    <property type="entry name" value="Ribosomal protein L29 (L29p)"/>
    <property type="match status" value="1"/>
</dbReference>
<dbReference type="PROSITE" id="PS00579">
    <property type="entry name" value="RIBOSOMAL_L29"/>
    <property type="match status" value="1"/>
</dbReference>
<proteinExistence type="inferred from homology"/>
<reference key="1">
    <citation type="submission" date="2008-10" db="EMBL/GenBank/DDBJ databases">
        <title>Genome sequence of Clostridium botulinum A2 Kyoto.</title>
        <authorList>
            <person name="Shrivastava S."/>
            <person name="Brinkac L.M."/>
            <person name="Brown J.L."/>
            <person name="Bruce D."/>
            <person name="Detter C.C."/>
            <person name="Johnson E.A."/>
            <person name="Munk C.A."/>
            <person name="Smith L.A."/>
            <person name="Smith T.J."/>
            <person name="Sutton G."/>
            <person name="Brettin T.S."/>
        </authorList>
    </citation>
    <scope>NUCLEOTIDE SEQUENCE [LARGE SCALE GENOMIC DNA]</scope>
    <source>
        <strain>Kyoto / Type A2</strain>
    </source>
</reference>
<evidence type="ECO:0000255" key="1">
    <source>
        <dbReference type="HAMAP-Rule" id="MF_00374"/>
    </source>
</evidence>
<evidence type="ECO:0000305" key="2"/>
<feature type="chain" id="PRO_1000194006" description="Large ribosomal subunit protein uL29">
    <location>
        <begin position="1"/>
        <end position="70"/>
    </location>
</feature>
<keyword id="KW-0687">Ribonucleoprotein</keyword>
<keyword id="KW-0689">Ribosomal protein</keyword>
<name>RL29_CLOBJ</name>
<gene>
    <name evidence="1" type="primary">rpmC</name>
    <name type="ordered locus">CLM_3940</name>
</gene>